<keyword id="KW-0963">Cytoplasm</keyword>
<keyword id="KW-0460">Magnesium</keyword>
<keyword id="KW-0479">Metal-binding</keyword>
<keyword id="KW-0566">Pantothenate biosynthesis</keyword>
<keyword id="KW-1185">Reference proteome</keyword>
<keyword id="KW-0808">Transferase</keyword>
<dbReference type="EC" id="2.1.2.11" evidence="1"/>
<dbReference type="EMBL" id="CR555306">
    <property type="protein sequence ID" value="CAI10161.1"/>
    <property type="molecule type" value="Genomic_DNA"/>
</dbReference>
<dbReference type="RefSeq" id="WP_011239806.1">
    <property type="nucleotide sequence ID" value="NC_006513.1"/>
</dbReference>
<dbReference type="SMR" id="Q5NXQ3"/>
<dbReference type="STRING" id="76114.ebA7119"/>
<dbReference type="KEGG" id="eba:ebA7119"/>
<dbReference type="eggNOG" id="COG0413">
    <property type="taxonomic scope" value="Bacteria"/>
</dbReference>
<dbReference type="HOGENOM" id="CLU_036645_1_0_4"/>
<dbReference type="OrthoDB" id="9781789at2"/>
<dbReference type="UniPathway" id="UPA00028">
    <property type="reaction ID" value="UER00003"/>
</dbReference>
<dbReference type="Proteomes" id="UP000006552">
    <property type="component" value="Chromosome"/>
</dbReference>
<dbReference type="GO" id="GO:0005737">
    <property type="term" value="C:cytoplasm"/>
    <property type="evidence" value="ECO:0007669"/>
    <property type="project" value="UniProtKB-SubCell"/>
</dbReference>
<dbReference type="GO" id="GO:0003864">
    <property type="term" value="F:3-methyl-2-oxobutanoate hydroxymethyltransferase activity"/>
    <property type="evidence" value="ECO:0007669"/>
    <property type="project" value="UniProtKB-UniRule"/>
</dbReference>
<dbReference type="GO" id="GO:0000287">
    <property type="term" value="F:magnesium ion binding"/>
    <property type="evidence" value="ECO:0007669"/>
    <property type="project" value="TreeGrafter"/>
</dbReference>
<dbReference type="GO" id="GO:0015940">
    <property type="term" value="P:pantothenate biosynthetic process"/>
    <property type="evidence" value="ECO:0007669"/>
    <property type="project" value="UniProtKB-UniRule"/>
</dbReference>
<dbReference type="CDD" id="cd06557">
    <property type="entry name" value="KPHMT-like"/>
    <property type="match status" value="1"/>
</dbReference>
<dbReference type="FunFam" id="3.20.20.60:FF:000003">
    <property type="entry name" value="3-methyl-2-oxobutanoate hydroxymethyltransferase"/>
    <property type="match status" value="1"/>
</dbReference>
<dbReference type="Gene3D" id="3.20.20.60">
    <property type="entry name" value="Phosphoenolpyruvate-binding domains"/>
    <property type="match status" value="1"/>
</dbReference>
<dbReference type="HAMAP" id="MF_00156">
    <property type="entry name" value="PanB"/>
    <property type="match status" value="1"/>
</dbReference>
<dbReference type="InterPro" id="IPR003700">
    <property type="entry name" value="Pantoate_hydroxy_MeTrfase"/>
</dbReference>
<dbReference type="InterPro" id="IPR015813">
    <property type="entry name" value="Pyrv/PenolPyrv_kinase-like_dom"/>
</dbReference>
<dbReference type="InterPro" id="IPR040442">
    <property type="entry name" value="Pyrv_kinase-like_dom_sf"/>
</dbReference>
<dbReference type="NCBIfam" id="TIGR00222">
    <property type="entry name" value="panB"/>
    <property type="match status" value="1"/>
</dbReference>
<dbReference type="NCBIfam" id="NF001452">
    <property type="entry name" value="PRK00311.1"/>
    <property type="match status" value="1"/>
</dbReference>
<dbReference type="PANTHER" id="PTHR20881">
    <property type="entry name" value="3-METHYL-2-OXOBUTANOATE HYDROXYMETHYLTRANSFERASE"/>
    <property type="match status" value="1"/>
</dbReference>
<dbReference type="PANTHER" id="PTHR20881:SF0">
    <property type="entry name" value="3-METHYL-2-OXOBUTANOATE HYDROXYMETHYLTRANSFERASE"/>
    <property type="match status" value="1"/>
</dbReference>
<dbReference type="Pfam" id="PF02548">
    <property type="entry name" value="Pantoate_transf"/>
    <property type="match status" value="1"/>
</dbReference>
<dbReference type="PIRSF" id="PIRSF000388">
    <property type="entry name" value="Pantoate_hydroxy_MeTrfase"/>
    <property type="match status" value="1"/>
</dbReference>
<dbReference type="SUPFAM" id="SSF51621">
    <property type="entry name" value="Phosphoenolpyruvate/pyruvate domain"/>
    <property type="match status" value="1"/>
</dbReference>
<comment type="function">
    <text evidence="1">Catalyzes the reversible reaction in which hydroxymethyl group from 5,10-methylenetetrahydrofolate is transferred onto alpha-ketoisovalerate to form ketopantoate.</text>
</comment>
<comment type="catalytic activity">
    <reaction evidence="1">
        <text>3-methyl-2-oxobutanoate + (6R)-5,10-methylene-5,6,7,8-tetrahydrofolate + H2O = 2-dehydropantoate + (6S)-5,6,7,8-tetrahydrofolate</text>
        <dbReference type="Rhea" id="RHEA:11824"/>
        <dbReference type="ChEBI" id="CHEBI:11561"/>
        <dbReference type="ChEBI" id="CHEBI:11851"/>
        <dbReference type="ChEBI" id="CHEBI:15377"/>
        <dbReference type="ChEBI" id="CHEBI:15636"/>
        <dbReference type="ChEBI" id="CHEBI:57453"/>
        <dbReference type="EC" id="2.1.2.11"/>
    </reaction>
</comment>
<comment type="cofactor">
    <cofactor evidence="1">
        <name>Mg(2+)</name>
        <dbReference type="ChEBI" id="CHEBI:18420"/>
    </cofactor>
    <text evidence="1">Binds 1 Mg(2+) ion per subunit.</text>
</comment>
<comment type="pathway">
    <text evidence="1">Cofactor biosynthesis; (R)-pantothenate biosynthesis; (R)-pantoate from 3-methyl-2-oxobutanoate: step 1/2.</text>
</comment>
<comment type="subunit">
    <text evidence="1">Homodecamer; pentamer of dimers.</text>
</comment>
<comment type="subcellular location">
    <subcellularLocation>
        <location evidence="1">Cytoplasm</location>
    </subcellularLocation>
</comment>
<comment type="similarity">
    <text evidence="1">Belongs to the PanB family.</text>
</comment>
<protein>
    <recommendedName>
        <fullName evidence="1">3-methyl-2-oxobutanoate hydroxymethyltransferase</fullName>
        <ecNumber evidence="1">2.1.2.11</ecNumber>
    </recommendedName>
    <alternativeName>
        <fullName evidence="1">Ketopantoate hydroxymethyltransferase</fullName>
        <shortName evidence="1">KPHMT</shortName>
    </alternativeName>
</protein>
<reference key="1">
    <citation type="journal article" date="2005" name="Arch. Microbiol.">
        <title>The genome sequence of an anaerobic aromatic-degrading denitrifying bacterium, strain EbN1.</title>
        <authorList>
            <person name="Rabus R."/>
            <person name="Kube M."/>
            <person name="Heider J."/>
            <person name="Beck A."/>
            <person name="Heitmann K."/>
            <person name="Widdel F."/>
            <person name="Reinhardt R."/>
        </authorList>
    </citation>
    <scope>NUCLEOTIDE SEQUENCE [LARGE SCALE GENOMIC DNA]</scope>
    <source>
        <strain>DSM 19018 / LMG 30748 / EbN1</strain>
    </source>
</reference>
<gene>
    <name evidence="1" type="primary">panB</name>
    <name type="ordered locus">AZOSEA40360</name>
    <name type="ORF">ebA7119</name>
</gene>
<name>PANB_AROAE</name>
<feature type="chain" id="PRO_0000297219" description="3-methyl-2-oxobutanoate hydroxymethyltransferase">
    <location>
        <begin position="1"/>
        <end position="271"/>
    </location>
</feature>
<feature type="active site" description="Proton acceptor" evidence="1">
    <location>
        <position position="188"/>
    </location>
</feature>
<feature type="binding site" evidence="1">
    <location>
        <begin position="51"/>
        <end position="52"/>
    </location>
    <ligand>
        <name>3-methyl-2-oxobutanoate</name>
        <dbReference type="ChEBI" id="CHEBI:11851"/>
    </ligand>
</feature>
<feature type="binding site" evidence="1">
    <location>
        <position position="51"/>
    </location>
    <ligand>
        <name>Mg(2+)</name>
        <dbReference type="ChEBI" id="CHEBI:18420"/>
    </ligand>
</feature>
<feature type="binding site" evidence="1">
    <location>
        <position position="90"/>
    </location>
    <ligand>
        <name>3-methyl-2-oxobutanoate</name>
        <dbReference type="ChEBI" id="CHEBI:11851"/>
    </ligand>
</feature>
<feature type="binding site" evidence="1">
    <location>
        <position position="90"/>
    </location>
    <ligand>
        <name>Mg(2+)</name>
        <dbReference type="ChEBI" id="CHEBI:18420"/>
    </ligand>
</feature>
<feature type="binding site" evidence="1">
    <location>
        <position position="119"/>
    </location>
    <ligand>
        <name>3-methyl-2-oxobutanoate</name>
        <dbReference type="ChEBI" id="CHEBI:11851"/>
    </ligand>
</feature>
<feature type="binding site" evidence="1">
    <location>
        <position position="121"/>
    </location>
    <ligand>
        <name>Mg(2+)</name>
        <dbReference type="ChEBI" id="CHEBI:18420"/>
    </ligand>
</feature>
<organism>
    <name type="scientific">Aromatoleum aromaticum (strain DSM 19018 / LMG 30748 / EbN1)</name>
    <name type="common">Azoarcus sp. (strain EbN1)</name>
    <dbReference type="NCBI Taxonomy" id="76114"/>
    <lineage>
        <taxon>Bacteria</taxon>
        <taxon>Pseudomonadati</taxon>
        <taxon>Pseudomonadota</taxon>
        <taxon>Betaproteobacteria</taxon>
        <taxon>Rhodocyclales</taxon>
        <taxon>Rhodocyclaceae</taxon>
        <taxon>Aromatoleum</taxon>
    </lineage>
</organism>
<sequence length="271" mass="28881">MSYLQDDKPVTLFEIGKMRAEGRKISMLTCYDASFASLLERAGVDILLVGDSLGNVVQGQKSTLPVTLEHMIYHTECVVRGSTRPFIVTDMPFGAYHESPSQAMHNAASLLAAGAQMVKLEGGTFMAETVRFLVERGIPVCAHIGLTPQSVHQLGGYRVQGRSEAAAAQLKGDALALEQAGAALMVMEMVPAALAREVTASLASMATIGIGAGPDCDGQVLVLHDMIGVYPGKKARFVRNFMTGKTDIDEAVASYVQAVRDGSFPAAEHCY</sequence>
<proteinExistence type="inferred from homology"/>
<evidence type="ECO:0000255" key="1">
    <source>
        <dbReference type="HAMAP-Rule" id="MF_00156"/>
    </source>
</evidence>
<accession>Q5NXQ3</accession>